<feature type="initiator methionine" description="Removed" evidence="1">
    <location>
        <position position="1"/>
    </location>
</feature>
<feature type="chain" id="PRO_1000202824" description="Formamidopyrimidine-DNA glycosylase">
    <location>
        <begin position="2"/>
        <end position="269"/>
    </location>
</feature>
<feature type="zinc finger region" description="FPG-type" evidence="2">
    <location>
        <begin position="235"/>
        <end position="269"/>
    </location>
</feature>
<feature type="active site" description="Schiff-base intermediate with DNA" evidence="2">
    <location>
        <position position="2"/>
    </location>
</feature>
<feature type="active site" description="Proton donor" evidence="2">
    <location>
        <position position="3"/>
    </location>
</feature>
<feature type="active site" description="Proton donor; for beta-elimination activity" evidence="2">
    <location>
        <position position="57"/>
    </location>
</feature>
<feature type="active site" description="Proton donor; for delta-elimination activity" evidence="2">
    <location>
        <position position="259"/>
    </location>
</feature>
<feature type="binding site" evidence="2">
    <location>
        <position position="90"/>
    </location>
    <ligand>
        <name>DNA</name>
        <dbReference type="ChEBI" id="CHEBI:16991"/>
    </ligand>
</feature>
<feature type="binding site" evidence="2">
    <location>
        <position position="109"/>
    </location>
    <ligand>
        <name>DNA</name>
        <dbReference type="ChEBI" id="CHEBI:16991"/>
    </ligand>
</feature>
<feature type="binding site" evidence="2">
    <location>
        <position position="150"/>
    </location>
    <ligand>
        <name>DNA</name>
        <dbReference type="ChEBI" id="CHEBI:16991"/>
    </ligand>
</feature>
<protein>
    <recommendedName>
        <fullName evidence="2">Formamidopyrimidine-DNA glycosylase</fullName>
        <shortName evidence="2">Fapy-DNA glycosylase</shortName>
        <ecNumber evidence="2">3.2.2.23</ecNumber>
    </recommendedName>
    <alternativeName>
        <fullName evidence="2">DNA-(apurinic or apyrimidinic site) lyase MutM</fullName>
        <shortName evidence="2">AP lyase MutM</shortName>
        <ecNumber evidence="2">4.2.99.18</ecNumber>
    </alternativeName>
</protein>
<keyword id="KW-0227">DNA damage</keyword>
<keyword id="KW-0234">DNA repair</keyword>
<keyword id="KW-0238">DNA-binding</keyword>
<keyword id="KW-0326">Glycosidase</keyword>
<keyword id="KW-0378">Hydrolase</keyword>
<keyword id="KW-0456">Lyase</keyword>
<keyword id="KW-0479">Metal-binding</keyword>
<keyword id="KW-0511">Multifunctional enzyme</keyword>
<keyword id="KW-0862">Zinc</keyword>
<keyword id="KW-0863">Zinc-finger</keyword>
<evidence type="ECO:0000250" key="1"/>
<evidence type="ECO:0000255" key="2">
    <source>
        <dbReference type="HAMAP-Rule" id="MF_00103"/>
    </source>
</evidence>
<organism>
    <name type="scientific">Edwardsiella ictaluri (strain 93-146)</name>
    <dbReference type="NCBI Taxonomy" id="634503"/>
    <lineage>
        <taxon>Bacteria</taxon>
        <taxon>Pseudomonadati</taxon>
        <taxon>Pseudomonadota</taxon>
        <taxon>Gammaproteobacteria</taxon>
        <taxon>Enterobacterales</taxon>
        <taxon>Hafniaceae</taxon>
        <taxon>Edwardsiella</taxon>
    </lineage>
</organism>
<accession>C5B9D8</accession>
<reference key="1">
    <citation type="submission" date="2009-03" db="EMBL/GenBank/DDBJ databases">
        <title>Complete genome sequence of Edwardsiella ictaluri 93-146.</title>
        <authorList>
            <person name="Williams M.L."/>
            <person name="Gillaspy A.F."/>
            <person name="Dyer D.W."/>
            <person name="Thune R.L."/>
            <person name="Waldbieser G.C."/>
            <person name="Schuster S.C."/>
            <person name="Gipson J."/>
            <person name="Zaitshik J."/>
            <person name="Landry C."/>
            <person name="Lawrence M.L."/>
        </authorList>
    </citation>
    <scope>NUCLEOTIDE SEQUENCE [LARGE SCALE GENOMIC DNA]</scope>
    <source>
        <strain>93-146</strain>
    </source>
</reference>
<name>FPG_EDWI9</name>
<proteinExistence type="inferred from homology"/>
<sequence>MPELPEVETSRRGIAPFLQGKTLSHLTVRQPRLRWPVSETLLTLRDRPILSVQRRAKYLLLELPEGWIVIHLGMSGSVRILPALTPPQKHDHIDLLLTDGMMLRYTDPRRFGAWLWYDSLATASVLAHLGPEPLSEAFSAEYLLEKARGRRTAVKPWLMDNTLVVGVGNIYASESLFSAQIHPDRLAGSLSADEAHLLVQTIKAVLQRSIDQGGTTLRDFLQADGKPGYFAQQLQVYGRAGEACLTCGTTIKRSKHGQRTTFYCPHCQR</sequence>
<dbReference type="EC" id="3.2.2.23" evidence="2"/>
<dbReference type="EC" id="4.2.99.18" evidence="2"/>
<dbReference type="EMBL" id="CP001600">
    <property type="protein sequence ID" value="ACR67319.1"/>
    <property type="molecule type" value="Genomic_DNA"/>
</dbReference>
<dbReference type="RefSeq" id="WP_015869540.1">
    <property type="nucleotide sequence ID" value="NZ_CP169062.1"/>
</dbReference>
<dbReference type="SMR" id="C5B9D8"/>
<dbReference type="STRING" id="67780.B6E78_11445"/>
<dbReference type="GeneID" id="69537167"/>
<dbReference type="KEGG" id="eic:NT01EI_0059"/>
<dbReference type="PATRIC" id="fig|634503.3.peg.51"/>
<dbReference type="HOGENOM" id="CLU_038423_1_1_6"/>
<dbReference type="OrthoDB" id="9800855at2"/>
<dbReference type="Proteomes" id="UP000001485">
    <property type="component" value="Chromosome"/>
</dbReference>
<dbReference type="GO" id="GO:0034039">
    <property type="term" value="F:8-oxo-7,8-dihydroguanine DNA N-glycosylase activity"/>
    <property type="evidence" value="ECO:0007669"/>
    <property type="project" value="TreeGrafter"/>
</dbReference>
<dbReference type="GO" id="GO:0140078">
    <property type="term" value="F:class I DNA-(apurinic or apyrimidinic site) endonuclease activity"/>
    <property type="evidence" value="ECO:0007669"/>
    <property type="project" value="UniProtKB-EC"/>
</dbReference>
<dbReference type="GO" id="GO:0003684">
    <property type="term" value="F:damaged DNA binding"/>
    <property type="evidence" value="ECO:0007669"/>
    <property type="project" value="InterPro"/>
</dbReference>
<dbReference type="GO" id="GO:0008270">
    <property type="term" value="F:zinc ion binding"/>
    <property type="evidence" value="ECO:0007669"/>
    <property type="project" value="UniProtKB-UniRule"/>
</dbReference>
<dbReference type="GO" id="GO:0006284">
    <property type="term" value="P:base-excision repair"/>
    <property type="evidence" value="ECO:0007669"/>
    <property type="project" value="InterPro"/>
</dbReference>
<dbReference type="CDD" id="cd08966">
    <property type="entry name" value="EcFpg-like_N"/>
    <property type="match status" value="1"/>
</dbReference>
<dbReference type="FunFam" id="1.10.8.50:FF:000003">
    <property type="entry name" value="Formamidopyrimidine-DNA glycosylase"/>
    <property type="match status" value="1"/>
</dbReference>
<dbReference type="FunFam" id="3.20.190.10:FF:000001">
    <property type="entry name" value="Formamidopyrimidine-DNA glycosylase"/>
    <property type="match status" value="1"/>
</dbReference>
<dbReference type="Gene3D" id="1.10.8.50">
    <property type="match status" value="1"/>
</dbReference>
<dbReference type="Gene3D" id="3.20.190.10">
    <property type="entry name" value="MutM-like, N-terminal"/>
    <property type="match status" value="1"/>
</dbReference>
<dbReference type="HAMAP" id="MF_00103">
    <property type="entry name" value="Fapy_DNA_glycosyl"/>
    <property type="match status" value="1"/>
</dbReference>
<dbReference type="InterPro" id="IPR015886">
    <property type="entry name" value="DNA_glyclase/AP_lyase_DNA-bd"/>
</dbReference>
<dbReference type="InterPro" id="IPR015887">
    <property type="entry name" value="DNA_glyclase_Znf_dom_DNA_BS"/>
</dbReference>
<dbReference type="InterPro" id="IPR020629">
    <property type="entry name" value="Formamido-pyr_DNA_Glyclase"/>
</dbReference>
<dbReference type="InterPro" id="IPR012319">
    <property type="entry name" value="FPG_cat"/>
</dbReference>
<dbReference type="InterPro" id="IPR035937">
    <property type="entry name" value="MutM-like_N-ter"/>
</dbReference>
<dbReference type="InterPro" id="IPR010979">
    <property type="entry name" value="Ribosomal_uS13-like_H2TH"/>
</dbReference>
<dbReference type="InterPro" id="IPR000214">
    <property type="entry name" value="Znf_DNA_glyclase/AP_lyase"/>
</dbReference>
<dbReference type="InterPro" id="IPR010663">
    <property type="entry name" value="Znf_FPG/IleRS"/>
</dbReference>
<dbReference type="NCBIfam" id="TIGR00577">
    <property type="entry name" value="fpg"/>
    <property type="match status" value="1"/>
</dbReference>
<dbReference type="NCBIfam" id="NF002211">
    <property type="entry name" value="PRK01103.1"/>
    <property type="match status" value="1"/>
</dbReference>
<dbReference type="PANTHER" id="PTHR22993">
    <property type="entry name" value="FORMAMIDOPYRIMIDINE-DNA GLYCOSYLASE"/>
    <property type="match status" value="1"/>
</dbReference>
<dbReference type="PANTHER" id="PTHR22993:SF9">
    <property type="entry name" value="FORMAMIDOPYRIMIDINE-DNA GLYCOSYLASE"/>
    <property type="match status" value="1"/>
</dbReference>
<dbReference type="Pfam" id="PF01149">
    <property type="entry name" value="Fapy_DNA_glyco"/>
    <property type="match status" value="1"/>
</dbReference>
<dbReference type="Pfam" id="PF06831">
    <property type="entry name" value="H2TH"/>
    <property type="match status" value="1"/>
</dbReference>
<dbReference type="Pfam" id="PF06827">
    <property type="entry name" value="zf-FPG_IleRS"/>
    <property type="match status" value="1"/>
</dbReference>
<dbReference type="SMART" id="SM00898">
    <property type="entry name" value="Fapy_DNA_glyco"/>
    <property type="match status" value="1"/>
</dbReference>
<dbReference type="SMART" id="SM01232">
    <property type="entry name" value="H2TH"/>
    <property type="match status" value="1"/>
</dbReference>
<dbReference type="SUPFAM" id="SSF57716">
    <property type="entry name" value="Glucocorticoid receptor-like (DNA-binding domain)"/>
    <property type="match status" value="1"/>
</dbReference>
<dbReference type="SUPFAM" id="SSF81624">
    <property type="entry name" value="N-terminal domain of MutM-like DNA repair proteins"/>
    <property type="match status" value="1"/>
</dbReference>
<dbReference type="SUPFAM" id="SSF46946">
    <property type="entry name" value="S13-like H2TH domain"/>
    <property type="match status" value="1"/>
</dbReference>
<dbReference type="PROSITE" id="PS51068">
    <property type="entry name" value="FPG_CAT"/>
    <property type="match status" value="1"/>
</dbReference>
<dbReference type="PROSITE" id="PS01242">
    <property type="entry name" value="ZF_FPG_1"/>
    <property type="match status" value="1"/>
</dbReference>
<dbReference type="PROSITE" id="PS51066">
    <property type="entry name" value="ZF_FPG_2"/>
    <property type="match status" value="1"/>
</dbReference>
<comment type="function">
    <text evidence="2">Involved in base excision repair of DNA damaged by oxidation or by mutagenic agents. Acts as a DNA glycosylase that recognizes and removes damaged bases. Has a preference for oxidized purines, such as 7,8-dihydro-8-oxoguanine (8-oxoG). Has AP (apurinic/apyrimidinic) lyase activity and introduces nicks in the DNA strand. Cleaves the DNA backbone by beta-delta elimination to generate a single-strand break at the site of the removed base with both 3'- and 5'-phosphates.</text>
</comment>
<comment type="catalytic activity">
    <reaction evidence="2">
        <text>Hydrolysis of DNA containing ring-opened 7-methylguanine residues, releasing 2,6-diamino-4-hydroxy-5-(N-methyl)formamidopyrimidine.</text>
        <dbReference type="EC" id="3.2.2.23"/>
    </reaction>
</comment>
<comment type="catalytic activity">
    <reaction evidence="2">
        <text>2'-deoxyribonucleotide-(2'-deoxyribose 5'-phosphate)-2'-deoxyribonucleotide-DNA = a 3'-end 2'-deoxyribonucleotide-(2,3-dehydro-2,3-deoxyribose 5'-phosphate)-DNA + a 5'-end 5'-phospho-2'-deoxyribonucleoside-DNA + H(+)</text>
        <dbReference type="Rhea" id="RHEA:66592"/>
        <dbReference type="Rhea" id="RHEA-COMP:13180"/>
        <dbReference type="Rhea" id="RHEA-COMP:16897"/>
        <dbReference type="Rhea" id="RHEA-COMP:17067"/>
        <dbReference type="ChEBI" id="CHEBI:15378"/>
        <dbReference type="ChEBI" id="CHEBI:136412"/>
        <dbReference type="ChEBI" id="CHEBI:157695"/>
        <dbReference type="ChEBI" id="CHEBI:167181"/>
        <dbReference type="EC" id="4.2.99.18"/>
    </reaction>
</comment>
<comment type="cofactor">
    <cofactor evidence="2">
        <name>Zn(2+)</name>
        <dbReference type="ChEBI" id="CHEBI:29105"/>
    </cofactor>
    <text evidence="2">Binds 1 zinc ion per subunit.</text>
</comment>
<comment type="subunit">
    <text evidence="2">Monomer.</text>
</comment>
<comment type="similarity">
    <text evidence="2">Belongs to the FPG family.</text>
</comment>
<gene>
    <name evidence="2" type="primary">mutM</name>
    <name evidence="2" type="synonym">fpg</name>
    <name type="ordered locus">NT01EI_0059</name>
</gene>